<proteinExistence type="evidence at transcript level"/>
<sequence length="245" mass="26765">MGRLDGKVIVLSAAAQGIGRAAAIAFAKEGAQVIATDVNEMKLKELEAYKGIQTRVLDVTKKDQIENLCKEIDRIDVLFNVAGFVHHGTILDCTEADWDFTMNVNVRSMYFMIKTFLPKMLAQKSGNIINMSSVASSIKGVVNRCVYSTSKAAVIGLTKSVASDFIDQGIRCNCICPGTVDTPSLRERIQARPDPEQALKDFLARQRTGRMATAEEVAHLCVYLASDESAYVTGNEHIIDGGWSL</sequence>
<evidence type="ECO:0000250" key="1"/>
<evidence type="ECO:0000250" key="2">
    <source>
        <dbReference type="UniProtKB" id="D4A1J4"/>
    </source>
</evidence>
<evidence type="ECO:0000250" key="3">
    <source>
        <dbReference type="UniProtKB" id="Q8JZV9"/>
    </source>
</evidence>
<evidence type="ECO:0000250" key="4">
    <source>
        <dbReference type="UniProtKB" id="Q9BUT1"/>
    </source>
</evidence>
<evidence type="ECO:0000255" key="5">
    <source>
        <dbReference type="PROSITE-ProRule" id="PRU10001"/>
    </source>
</evidence>
<evidence type="ECO:0000305" key="6"/>
<comment type="function">
    <text evidence="2 3 4">NAD(H)-dependent dehydrogenase/reductase with a preference for cyclic substrates (By similarity). Catalyzes stereoselective conversion of 4-oxo-L-proline to cis-4-hydroxy-L-proline, likely a detoxification mechanism for ketoprolines (By similarity). Mediates the formation of 2,5-dihydroxybenzoate (2,5-DHBA), a siderophore that chelates free cytoplasmic iron, thereby regulating iron transport and homeostasis while protecting cells against free radical-induced oxidative stress. The iron-siderophore complex is imported into mitochondria, providing an iron source for mitochondrial metabolic processes in particular heme synthesis (By similarity). May act as a 3-hydroxybutyrate dehydrogenase (By similarity).</text>
</comment>
<comment type="catalytic activity">
    <reaction evidence="4">
        <text>cis-4-hydroxy-L-proline + NAD(+) = 4-oxo-L-proline + NADH + H(+)</text>
        <dbReference type="Rhea" id="RHEA:13601"/>
        <dbReference type="ChEBI" id="CHEBI:15378"/>
        <dbReference type="ChEBI" id="CHEBI:57540"/>
        <dbReference type="ChEBI" id="CHEBI:57945"/>
        <dbReference type="ChEBI" id="CHEBI:63727"/>
        <dbReference type="ChEBI" id="CHEBI:84813"/>
        <dbReference type="EC" id="1.1.1.104"/>
    </reaction>
</comment>
<comment type="catalytic activity">
    <reaction evidence="4">
        <text>(R)-3-hydroxybutanoate + NAD(+) = acetoacetate + NADH + H(+)</text>
        <dbReference type="Rhea" id="RHEA:20521"/>
        <dbReference type="ChEBI" id="CHEBI:10983"/>
        <dbReference type="ChEBI" id="CHEBI:13705"/>
        <dbReference type="ChEBI" id="CHEBI:15378"/>
        <dbReference type="ChEBI" id="CHEBI:57540"/>
        <dbReference type="ChEBI" id="CHEBI:57945"/>
        <dbReference type="EC" id="1.1.1.30"/>
    </reaction>
</comment>
<comment type="pathway">
    <text evidence="4">Amino-acid metabolism.</text>
</comment>
<comment type="pathway">
    <text evidence="3">Siderophore biosynthesis.</text>
</comment>
<comment type="subunit">
    <text evidence="4">Homotetramer.</text>
</comment>
<comment type="subcellular location">
    <subcellularLocation>
        <location evidence="4">Cytoplasm</location>
    </subcellularLocation>
</comment>
<comment type="similarity">
    <text evidence="6">Belongs to the short-chain dehydrogenases/reductases (SDR) family.</text>
</comment>
<reference key="1">
    <citation type="submission" date="2005-10" db="EMBL/GenBank/DDBJ databases">
        <authorList>
            <consortium name="NIH - Xenopus Gene Collection (XGC) project"/>
        </authorList>
    </citation>
    <scope>NUCLEOTIDE SEQUENCE [LARGE SCALE MRNA]</scope>
    <source>
        <tissue>Testis</tissue>
    </source>
</reference>
<name>DHRS6_XENLA</name>
<organism>
    <name type="scientific">Xenopus laevis</name>
    <name type="common">African clawed frog</name>
    <dbReference type="NCBI Taxonomy" id="8355"/>
    <lineage>
        <taxon>Eukaryota</taxon>
        <taxon>Metazoa</taxon>
        <taxon>Chordata</taxon>
        <taxon>Craniata</taxon>
        <taxon>Vertebrata</taxon>
        <taxon>Euteleostomi</taxon>
        <taxon>Amphibia</taxon>
        <taxon>Batrachia</taxon>
        <taxon>Anura</taxon>
        <taxon>Pipoidea</taxon>
        <taxon>Pipidae</taxon>
        <taxon>Xenopodinae</taxon>
        <taxon>Xenopus</taxon>
        <taxon>Xenopus</taxon>
    </lineage>
</organism>
<feature type="chain" id="PRO_0000398631" description="Dehydrogenase/reductase SDR family member 6">
    <location>
        <begin position="1"/>
        <end position="245"/>
    </location>
</feature>
<feature type="active site" description="Proton acceptor" evidence="5">
    <location>
        <position position="147"/>
    </location>
</feature>
<feature type="binding site" evidence="4">
    <location>
        <begin position="16"/>
        <end position="18"/>
    </location>
    <ligand>
        <name>NAD(+)</name>
        <dbReference type="ChEBI" id="CHEBI:57540"/>
    </ligand>
</feature>
<feature type="binding site" evidence="4">
    <location>
        <position position="37"/>
    </location>
    <ligand>
        <name>NAD(+)</name>
        <dbReference type="ChEBI" id="CHEBI:57540"/>
    </ligand>
</feature>
<feature type="binding site" evidence="4">
    <location>
        <position position="58"/>
    </location>
    <ligand>
        <name>NAD(+)</name>
        <dbReference type="ChEBI" id="CHEBI:57540"/>
    </ligand>
</feature>
<feature type="binding site" evidence="1">
    <location>
        <position position="144"/>
    </location>
    <ligand>
        <name>substrate</name>
    </ligand>
</feature>
<feature type="binding site" evidence="4">
    <location>
        <position position="151"/>
    </location>
    <ligand>
        <name>NAD(+)</name>
        <dbReference type="ChEBI" id="CHEBI:57540"/>
    </ligand>
</feature>
<feature type="binding site" evidence="4">
    <location>
        <begin position="180"/>
        <end position="184"/>
    </location>
    <ligand>
        <name>NAD(+)</name>
        <dbReference type="ChEBI" id="CHEBI:57540"/>
    </ligand>
</feature>
<feature type="binding site" evidence="1">
    <location>
        <position position="188"/>
    </location>
    <ligand>
        <name>substrate</name>
    </ligand>
</feature>
<feature type="binding site" evidence="1">
    <location>
        <position position="205"/>
    </location>
    <ligand>
        <name>substrate</name>
    </ligand>
</feature>
<gene>
    <name type="primary">bdh2</name>
</gene>
<protein>
    <recommendedName>
        <fullName>Dehydrogenase/reductase SDR family member 6</fullName>
        <ecNumber evidence="6">1.1.1.-</ecNumber>
    </recommendedName>
    <alternativeName>
        <fullName>(R)-beta-hydroxybutyrate dehydrogenase</fullName>
    </alternativeName>
    <alternativeName>
        <fullName>3-hydroxybutyrate dehydrogenase type 2</fullName>
        <ecNumber evidence="4">1.1.1.30</ecNumber>
    </alternativeName>
    <alternativeName>
        <fullName>4-oxo-L-proline reductase</fullName>
        <ecNumber evidence="2 4">1.1.1.104</ecNumber>
    </alternativeName>
    <alternativeName>
        <fullName>Oxidoreductase UCPA</fullName>
    </alternativeName>
    <alternativeName>
        <fullName>Short chain dehydrogenase/reductase family 15C member 1</fullName>
    </alternativeName>
</protein>
<dbReference type="EC" id="1.1.1.-" evidence="6"/>
<dbReference type="EC" id="1.1.1.30" evidence="4"/>
<dbReference type="EC" id="1.1.1.104" evidence="2 4"/>
<dbReference type="EMBL" id="BC106561">
    <property type="protein sequence ID" value="AAI06562.1"/>
    <property type="molecule type" value="mRNA"/>
</dbReference>
<dbReference type="RefSeq" id="NP_001089786.1">
    <property type="nucleotide sequence ID" value="NM_001096317.1"/>
</dbReference>
<dbReference type="SMR" id="Q3KPT7"/>
<dbReference type="BioGRID" id="592632">
    <property type="interactions" value="1"/>
</dbReference>
<dbReference type="GeneID" id="734851"/>
<dbReference type="KEGG" id="xla:734851"/>
<dbReference type="AGR" id="Xenbase:XB-GENE-985759"/>
<dbReference type="CTD" id="734851"/>
<dbReference type="Xenbase" id="XB-GENE-985759">
    <property type="gene designation" value="bdh2.L"/>
</dbReference>
<dbReference type="OrthoDB" id="47007at2759"/>
<dbReference type="Proteomes" id="UP000186698">
    <property type="component" value="Chromosome 1L"/>
</dbReference>
<dbReference type="Bgee" id="734851">
    <property type="expression patterns" value="Expressed in kidney and 19 other cell types or tissues"/>
</dbReference>
<dbReference type="GO" id="GO:0005737">
    <property type="term" value="C:cytoplasm"/>
    <property type="evidence" value="ECO:0000318"/>
    <property type="project" value="GO_Central"/>
</dbReference>
<dbReference type="GO" id="GO:0003858">
    <property type="term" value="F:3-hydroxybutyrate dehydrogenase activity"/>
    <property type="evidence" value="ECO:0000318"/>
    <property type="project" value="GO_Central"/>
</dbReference>
<dbReference type="GO" id="GO:0016617">
    <property type="term" value="F:4-oxoproline reductase activity"/>
    <property type="evidence" value="ECO:0007669"/>
    <property type="project" value="RHEA"/>
</dbReference>
<dbReference type="GO" id="GO:0016628">
    <property type="term" value="F:oxidoreductase activity, acting on the CH-CH group of donors, NAD or NADP as acceptor"/>
    <property type="evidence" value="ECO:0000250"/>
    <property type="project" value="UniProtKB"/>
</dbReference>
<dbReference type="GO" id="GO:0042168">
    <property type="term" value="P:heme metabolic process"/>
    <property type="evidence" value="ECO:0000250"/>
    <property type="project" value="UniProtKB"/>
</dbReference>
<dbReference type="GO" id="GO:0006629">
    <property type="term" value="P:lipid metabolic process"/>
    <property type="evidence" value="ECO:0007669"/>
    <property type="project" value="UniProtKB-KW"/>
</dbReference>
<dbReference type="GO" id="GO:0019290">
    <property type="term" value="P:siderophore biosynthetic process"/>
    <property type="evidence" value="ECO:0000250"/>
    <property type="project" value="UniProtKB"/>
</dbReference>
<dbReference type="CDD" id="cd05368">
    <property type="entry name" value="DHRS6_like_SDR_c"/>
    <property type="match status" value="1"/>
</dbReference>
<dbReference type="FunFam" id="3.40.50.720:FF:000211">
    <property type="entry name" value="3-hydroxybutyrate dehydrogenase type 2"/>
    <property type="match status" value="1"/>
</dbReference>
<dbReference type="Gene3D" id="3.40.50.720">
    <property type="entry name" value="NAD(P)-binding Rossmann-like Domain"/>
    <property type="match status" value="1"/>
</dbReference>
<dbReference type="InterPro" id="IPR036291">
    <property type="entry name" value="NAD(P)-bd_dom_sf"/>
</dbReference>
<dbReference type="InterPro" id="IPR020904">
    <property type="entry name" value="Sc_DH/Rdtase_CS"/>
</dbReference>
<dbReference type="InterPro" id="IPR002347">
    <property type="entry name" value="SDR_fam"/>
</dbReference>
<dbReference type="InterPro" id="IPR051122">
    <property type="entry name" value="SDR_superfamily_enzyme"/>
</dbReference>
<dbReference type="PANTHER" id="PTHR43477:SF4">
    <property type="entry name" value="DEHYDROGENASE_REDUCTASE SDR FAMILY MEMBER 6"/>
    <property type="match status" value="1"/>
</dbReference>
<dbReference type="PANTHER" id="PTHR43477">
    <property type="entry name" value="DIHYDROANTICAPSIN 7-DEHYDROGENASE"/>
    <property type="match status" value="1"/>
</dbReference>
<dbReference type="Pfam" id="PF13561">
    <property type="entry name" value="adh_short_C2"/>
    <property type="match status" value="1"/>
</dbReference>
<dbReference type="PRINTS" id="PR00081">
    <property type="entry name" value="GDHRDH"/>
</dbReference>
<dbReference type="PRINTS" id="PR00080">
    <property type="entry name" value="SDRFAMILY"/>
</dbReference>
<dbReference type="SUPFAM" id="SSF51735">
    <property type="entry name" value="NAD(P)-binding Rossmann-fold domains"/>
    <property type="match status" value="1"/>
</dbReference>
<dbReference type="PROSITE" id="PS00061">
    <property type="entry name" value="ADH_SHORT"/>
    <property type="match status" value="1"/>
</dbReference>
<accession>Q3KPT7</accession>
<keyword id="KW-0963">Cytoplasm</keyword>
<keyword id="KW-0443">Lipid metabolism</keyword>
<keyword id="KW-0520">NAD</keyword>
<keyword id="KW-0560">Oxidoreductase</keyword>
<keyword id="KW-1185">Reference proteome</keyword>